<reference key="1">
    <citation type="journal article" date="2005" name="Proc. Natl. Acad. Sci. U.S.A.">
        <title>Complete genome sequence of Vibrio fischeri: a symbiotic bacterium with pathogenic congeners.</title>
        <authorList>
            <person name="Ruby E.G."/>
            <person name="Urbanowski M."/>
            <person name="Campbell J."/>
            <person name="Dunn A."/>
            <person name="Faini M."/>
            <person name="Gunsalus R."/>
            <person name="Lostroh P."/>
            <person name="Lupp C."/>
            <person name="McCann J."/>
            <person name="Millikan D."/>
            <person name="Schaefer A."/>
            <person name="Stabb E."/>
            <person name="Stevens A."/>
            <person name="Visick K."/>
            <person name="Whistler C."/>
            <person name="Greenberg E.P."/>
        </authorList>
    </citation>
    <scope>NUCLEOTIDE SEQUENCE [LARGE SCALE GENOMIC DNA]</scope>
    <source>
        <strain>ATCC 700601 / ES114</strain>
    </source>
</reference>
<proteinExistence type="inferred from homology"/>
<evidence type="ECO:0000255" key="1">
    <source>
        <dbReference type="HAMAP-Rule" id="MF_01313"/>
    </source>
</evidence>
<evidence type="ECO:0000305" key="2"/>
<protein>
    <recommendedName>
        <fullName evidence="1">Nitric oxide reductase FlRd-NAD(+) reductase</fullName>
        <ecNumber evidence="1">1.18.1.-</ecNumber>
    </recommendedName>
    <alternativeName>
        <fullName evidence="1">Flavorubredoxin reductase</fullName>
        <shortName evidence="1">FlRd-reductase</shortName>
        <shortName evidence="1">FlavoRb reductase</shortName>
    </alternativeName>
</protein>
<gene>
    <name evidence="1" type="primary">norW</name>
    <name evidence="1" type="synonym">flrR</name>
    <name type="ordered locus">VF_1781</name>
</gene>
<sequence>MSLPIVIIGSGFASYQLIKTIRRTNNDCPIHVFTNDSGDDYNKPDLSHVFSKQQSPEEVVTLSGGDFAEQYNVILHRHTWVESIDTEIQAITANGEQYAYGKLVLATGSQTFIPPFHGDGCGDILTLNSLKEFAGIQQKVLESKKVLVVGGGLIGTELAMDLANAGKMVTLVEPNTHLLANMVPDFISLPLEKACKEKGITVNLSDCVQAVNKQEQGYRVTTSNGHSYYVDCVISAAGLKPNTKLATEANLMVNRGIVVDLNLQTSANNIYALGDCAEIEGKVMAYLQPILLSANALAKTLLGTDTALSMPNMMVKVKTPNYPIQLAGNTSTDIERWSVDIDTQGLCAKAYNINNQLTGFVVTNERVKNAFPLFRELNTTN</sequence>
<comment type="function">
    <text evidence="1">One of at least two accessory proteins for anaerobic nitric oxide (NO) reductase. Reduces the rubredoxin moiety of NO reductase.</text>
</comment>
<comment type="catalytic activity">
    <reaction evidence="1">
        <text>2 reduced [nitric oxide reductase rubredoxin domain] + NAD(+) + H(+) = 2 oxidized [nitric oxide reductase rubredoxin domain] + NADH</text>
        <dbReference type="Rhea" id="RHEA:42960"/>
        <dbReference type="Rhea" id="RHEA-COMP:10304"/>
        <dbReference type="Rhea" id="RHEA-COMP:10305"/>
        <dbReference type="ChEBI" id="CHEBI:15378"/>
        <dbReference type="ChEBI" id="CHEBI:29033"/>
        <dbReference type="ChEBI" id="CHEBI:29034"/>
        <dbReference type="ChEBI" id="CHEBI:57540"/>
        <dbReference type="ChEBI" id="CHEBI:57945"/>
    </reaction>
</comment>
<comment type="cofactor">
    <cofactor evidence="1">
        <name>FAD</name>
        <dbReference type="ChEBI" id="CHEBI:57692"/>
    </cofactor>
</comment>
<comment type="pathway">
    <text evidence="1">Nitrogen metabolism; nitric oxide reduction.</text>
</comment>
<comment type="subcellular location">
    <subcellularLocation>
        <location evidence="1">Cytoplasm</location>
    </subcellularLocation>
</comment>
<comment type="similarity">
    <text evidence="1">Belongs to the FAD-dependent oxidoreductase family.</text>
</comment>
<comment type="sequence caution" evidence="2">
    <conflict type="erroneous initiation">
        <sequence resource="EMBL-CDS" id="AAW86276"/>
    </conflict>
</comment>
<name>NORW_ALIF1</name>
<organism>
    <name type="scientific">Aliivibrio fischeri (strain ATCC 700601 / ES114)</name>
    <name type="common">Vibrio fischeri</name>
    <dbReference type="NCBI Taxonomy" id="312309"/>
    <lineage>
        <taxon>Bacteria</taxon>
        <taxon>Pseudomonadati</taxon>
        <taxon>Pseudomonadota</taxon>
        <taxon>Gammaproteobacteria</taxon>
        <taxon>Vibrionales</taxon>
        <taxon>Vibrionaceae</taxon>
        <taxon>Aliivibrio</taxon>
    </lineage>
</organism>
<accession>Q5E3X0</accession>
<dbReference type="EC" id="1.18.1.-" evidence="1"/>
<dbReference type="EMBL" id="CP000020">
    <property type="protein sequence ID" value="AAW86276.1"/>
    <property type="status" value="ALT_INIT"/>
    <property type="molecule type" value="Genomic_DNA"/>
</dbReference>
<dbReference type="RefSeq" id="WP_047863521.1">
    <property type="nucleotide sequence ID" value="NC_006840.2"/>
</dbReference>
<dbReference type="RefSeq" id="YP_205164.1">
    <property type="nucleotide sequence ID" value="NC_006840.2"/>
</dbReference>
<dbReference type="SMR" id="Q5E3X0"/>
<dbReference type="STRING" id="312309.VF_1781"/>
<dbReference type="EnsemblBacteria" id="AAW86276">
    <property type="protein sequence ID" value="AAW86276"/>
    <property type="gene ID" value="VF_1781"/>
</dbReference>
<dbReference type="GeneID" id="54164481"/>
<dbReference type="KEGG" id="vfi:VF_1781"/>
<dbReference type="PATRIC" id="fig|312309.11.peg.1807"/>
<dbReference type="eggNOG" id="COG0446">
    <property type="taxonomic scope" value="Bacteria"/>
</dbReference>
<dbReference type="HOGENOM" id="CLU_003291_4_4_6"/>
<dbReference type="OrthoDB" id="9808980at2"/>
<dbReference type="UniPathway" id="UPA00638"/>
<dbReference type="Proteomes" id="UP000000537">
    <property type="component" value="Chromosome I"/>
</dbReference>
<dbReference type="GO" id="GO:0005737">
    <property type="term" value="C:cytoplasm"/>
    <property type="evidence" value="ECO:0007669"/>
    <property type="project" value="UniProtKB-SubCell"/>
</dbReference>
<dbReference type="GO" id="GO:0016731">
    <property type="term" value="F:oxidoreductase activity, acting on iron-sulfur proteins as donors, NAD or NADP as acceptor"/>
    <property type="evidence" value="ECO:0007669"/>
    <property type="project" value="UniProtKB-UniRule"/>
</dbReference>
<dbReference type="Gene3D" id="3.30.390.120">
    <property type="match status" value="1"/>
</dbReference>
<dbReference type="Gene3D" id="3.50.50.60">
    <property type="entry name" value="FAD/NAD(P)-binding domain"/>
    <property type="match status" value="2"/>
</dbReference>
<dbReference type="HAMAP" id="MF_01313">
    <property type="entry name" value="NorW"/>
    <property type="match status" value="1"/>
</dbReference>
<dbReference type="InterPro" id="IPR050260">
    <property type="entry name" value="FAD-bd_OxRdtase"/>
</dbReference>
<dbReference type="InterPro" id="IPR036188">
    <property type="entry name" value="FAD/NAD-bd_sf"/>
</dbReference>
<dbReference type="InterPro" id="IPR023753">
    <property type="entry name" value="FAD/NAD-binding_dom"/>
</dbReference>
<dbReference type="InterPro" id="IPR023961">
    <property type="entry name" value="NO_rdtase_NorW"/>
</dbReference>
<dbReference type="InterPro" id="IPR041364">
    <property type="entry name" value="Rbx-bd"/>
</dbReference>
<dbReference type="NCBIfam" id="NF003437">
    <property type="entry name" value="PRK04965.1"/>
    <property type="match status" value="1"/>
</dbReference>
<dbReference type="PANTHER" id="PTHR43429:SF3">
    <property type="entry name" value="NITRITE REDUCTASE [NAD(P)H]"/>
    <property type="match status" value="1"/>
</dbReference>
<dbReference type="PANTHER" id="PTHR43429">
    <property type="entry name" value="PYRIDINE NUCLEOTIDE-DISULFIDE OXIDOREDUCTASE DOMAIN-CONTAINING"/>
    <property type="match status" value="1"/>
</dbReference>
<dbReference type="Pfam" id="PF07992">
    <property type="entry name" value="Pyr_redox_2"/>
    <property type="match status" value="1"/>
</dbReference>
<dbReference type="Pfam" id="PF18113">
    <property type="entry name" value="Rbx_binding"/>
    <property type="match status" value="1"/>
</dbReference>
<dbReference type="PRINTS" id="PR00368">
    <property type="entry name" value="FADPNR"/>
</dbReference>
<dbReference type="PRINTS" id="PR00411">
    <property type="entry name" value="PNDRDTASEI"/>
</dbReference>
<dbReference type="SUPFAM" id="SSF51905">
    <property type="entry name" value="FAD/NAD(P)-binding domain"/>
    <property type="match status" value="1"/>
</dbReference>
<keyword id="KW-0963">Cytoplasm</keyword>
<keyword id="KW-0274">FAD</keyword>
<keyword id="KW-0285">Flavoprotein</keyword>
<keyword id="KW-0520">NAD</keyword>
<keyword id="KW-0560">Oxidoreductase</keyword>
<keyword id="KW-1185">Reference proteome</keyword>
<feature type="chain" id="PRO_0000305614" description="Nitric oxide reductase FlRd-NAD(+) reductase">
    <location>
        <begin position="1"/>
        <end position="381"/>
    </location>
</feature>